<sequence length="179" mass="20093">MLKVEERYTNAVPELQKFFNYGNIMQVPKLVKVVINTGVGEAVSNSKAMETAEADIVAIAGQHPVVTRAKRSVANFKLRAGMPIGLKVTLRGQRMYDFLNKLFFITLPRVRDFQGVPNTAFDERGNYTLGFKDHSVFPEIDFNKIEKPRGLEICIVTTANTPEEGKKLLELLGMPFSKD</sequence>
<gene>
    <name evidence="1" type="primary">rplE</name>
    <name type="ordered locus">cbdbA451</name>
</gene>
<feature type="chain" id="PRO_0000242993" description="Large ribosomal subunit protein uL5">
    <location>
        <begin position="1"/>
        <end position="179"/>
    </location>
</feature>
<evidence type="ECO:0000255" key="1">
    <source>
        <dbReference type="HAMAP-Rule" id="MF_01333"/>
    </source>
</evidence>
<evidence type="ECO:0000305" key="2"/>
<protein>
    <recommendedName>
        <fullName evidence="1">Large ribosomal subunit protein uL5</fullName>
    </recommendedName>
    <alternativeName>
        <fullName evidence="2">50S ribosomal protein L5</fullName>
    </alternativeName>
</protein>
<reference key="1">
    <citation type="journal article" date="2005" name="Nat. Biotechnol.">
        <title>Genome sequence of the chlorinated compound-respiring bacterium Dehalococcoides species strain CBDB1.</title>
        <authorList>
            <person name="Kube M."/>
            <person name="Beck A."/>
            <person name="Zinder S.H."/>
            <person name="Kuhl H."/>
            <person name="Reinhardt R."/>
            <person name="Adrian L."/>
        </authorList>
    </citation>
    <scope>NUCLEOTIDE SEQUENCE [LARGE SCALE GENOMIC DNA]</scope>
    <source>
        <strain>CBDB1</strain>
    </source>
</reference>
<accession>Q3ZZL2</accession>
<organism>
    <name type="scientific">Dehalococcoides mccartyi (strain CBDB1)</name>
    <dbReference type="NCBI Taxonomy" id="255470"/>
    <lineage>
        <taxon>Bacteria</taxon>
        <taxon>Bacillati</taxon>
        <taxon>Chloroflexota</taxon>
        <taxon>Dehalococcoidia</taxon>
        <taxon>Dehalococcoidales</taxon>
        <taxon>Dehalococcoidaceae</taxon>
        <taxon>Dehalococcoides</taxon>
    </lineage>
</organism>
<comment type="function">
    <text evidence="1">This is one of the proteins that bind and probably mediate the attachment of the 5S RNA into the large ribosomal subunit, where it forms part of the central protuberance. In the 70S ribosome it contacts protein S13 of the 30S subunit (bridge B1b), connecting the 2 subunits; this bridge is implicated in subunit movement. Contacts the P site tRNA; the 5S rRNA and some of its associated proteins might help stabilize positioning of ribosome-bound tRNAs.</text>
</comment>
<comment type="subunit">
    <text evidence="1">Part of the 50S ribosomal subunit; part of the 5S rRNA/L5/L18/L25 subcomplex. Contacts the 5S rRNA and the P site tRNA. Forms a bridge to the 30S subunit in the 70S ribosome.</text>
</comment>
<comment type="similarity">
    <text evidence="1">Belongs to the universal ribosomal protein uL5 family.</text>
</comment>
<proteinExistence type="inferred from homology"/>
<keyword id="KW-0687">Ribonucleoprotein</keyword>
<keyword id="KW-0689">Ribosomal protein</keyword>
<keyword id="KW-0694">RNA-binding</keyword>
<keyword id="KW-0699">rRNA-binding</keyword>
<keyword id="KW-0820">tRNA-binding</keyword>
<dbReference type="EMBL" id="AJ965256">
    <property type="protein sequence ID" value="CAI82651.1"/>
    <property type="molecule type" value="Genomic_DNA"/>
</dbReference>
<dbReference type="RefSeq" id="WP_011309008.1">
    <property type="nucleotide sequence ID" value="NC_007356.1"/>
</dbReference>
<dbReference type="SMR" id="Q3ZZL2"/>
<dbReference type="KEGG" id="deh:cbdbA451"/>
<dbReference type="HOGENOM" id="CLU_061015_2_1_0"/>
<dbReference type="Proteomes" id="UP000000433">
    <property type="component" value="Chromosome"/>
</dbReference>
<dbReference type="GO" id="GO:1990904">
    <property type="term" value="C:ribonucleoprotein complex"/>
    <property type="evidence" value="ECO:0007669"/>
    <property type="project" value="UniProtKB-KW"/>
</dbReference>
<dbReference type="GO" id="GO:0005840">
    <property type="term" value="C:ribosome"/>
    <property type="evidence" value="ECO:0007669"/>
    <property type="project" value="UniProtKB-KW"/>
</dbReference>
<dbReference type="GO" id="GO:0019843">
    <property type="term" value="F:rRNA binding"/>
    <property type="evidence" value="ECO:0007669"/>
    <property type="project" value="UniProtKB-UniRule"/>
</dbReference>
<dbReference type="GO" id="GO:0003735">
    <property type="term" value="F:structural constituent of ribosome"/>
    <property type="evidence" value="ECO:0007669"/>
    <property type="project" value="InterPro"/>
</dbReference>
<dbReference type="GO" id="GO:0000049">
    <property type="term" value="F:tRNA binding"/>
    <property type="evidence" value="ECO:0007669"/>
    <property type="project" value="UniProtKB-UniRule"/>
</dbReference>
<dbReference type="GO" id="GO:0006412">
    <property type="term" value="P:translation"/>
    <property type="evidence" value="ECO:0007669"/>
    <property type="project" value="UniProtKB-UniRule"/>
</dbReference>
<dbReference type="FunFam" id="3.30.1440.10:FF:000001">
    <property type="entry name" value="50S ribosomal protein L5"/>
    <property type="match status" value="1"/>
</dbReference>
<dbReference type="Gene3D" id="3.30.1440.10">
    <property type="match status" value="1"/>
</dbReference>
<dbReference type="HAMAP" id="MF_01333_B">
    <property type="entry name" value="Ribosomal_uL5_B"/>
    <property type="match status" value="1"/>
</dbReference>
<dbReference type="InterPro" id="IPR002132">
    <property type="entry name" value="Ribosomal_uL5"/>
</dbReference>
<dbReference type="InterPro" id="IPR020930">
    <property type="entry name" value="Ribosomal_uL5_bac-type"/>
</dbReference>
<dbReference type="InterPro" id="IPR031309">
    <property type="entry name" value="Ribosomal_uL5_C"/>
</dbReference>
<dbReference type="InterPro" id="IPR020929">
    <property type="entry name" value="Ribosomal_uL5_CS"/>
</dbReference>
<dbReference type="InterPro" id="IPR022803">
    <property type="entry name" value="Ribosomal_uL5_dom_sf"/>
</dbReference>
<dbReference type="InterPro" id="IPR031310">
    <property type="entry name" value="Ribosomal_uL5_N"/>
</dbReference>
<dbReference type="NCBIfam" id="NF000585">
    <property type="entry name" value="PRK00010.1"/>
    <property type="match status" value="1"/>
</dbReference>
<dbReference type="PANTHER" id="PTHR11994">
    <property type="entry name" value="60S RIBOSOMAL PROTEIN L11-RELATED"/>
    <property type="match status" value="1"/>
</dbReference>
<dbReference type="Pfam" id="PF00281">
    <property type="entry name" value="Ribosomal_L5"/>
    <property type="match status" value="1"/>
</dbReference>
<dbReference type="Pfam" id="PF00673">
    <property type="entry name" value="Ribosomal_L5_C"/>
    <property type="match status" value="1"/>
</dbReference>
<dbReference type="PIRSF" id="PIRSF002161">
    <property type="entry name" value="Ribosomal_L5"/>
    <property type="match status" value="1"/>
</dbReference>
<dbReference type="SUPFAM" id="SSF55282">
    <property type="entry name" value="RL5-like"/>
    <property type="match status" value="1"/>
</dbReference>
<dbReference type="PROSITE" id="PS00358">
    <property type="entry name" value="RIBOSOMAL_L5"/>
    <property type="match status" value="1"/>
</dbReference>
<name>RL5_DEHMC</name>